<accession>B3PGE8</accession>
<sequence length="239" mass="25665">MQRPSGRNPQALRPIRITRRYTKHAEGSVLIEFGDTKVICTASVVAGVPSFLRGQGQGWLTAEYGMLPRSTGTRMDREAARGKQQGRTVEIQRLIGRSLRAAIDLNALGENTIHLDCDVIQADGGTRTASITGAWVALADAVAWLKAEGRVTDEPLKRAIASVSVGIYQGVPVLDLDYPEDSAADTDMNVVMGDDGGIIEIQGTAEAEPFTEAEFAAMLSLAKQGIGQLHQLQQQALSH</sequence>
<reference key="1">
    <citation type="journal article" date="2008" name="J. Bacteriol.">
        <title>Insights into plant cell wall degradation from the genome sequence of the soil bacterium Cellvibrio japonicus.</title>
        <authorList>
            <person name="DeBoy R.T."/>
            <person name="Mongodin E.F."/>
            <person name="Fouts D.E."/>
            <person name="Tailford L.E."/>
            <person name="Khouri H."/>
            <person name="Emerson J.B."/>
            <person name="Mohamoud Y."/>
            <person name="Watkins K."/>
            <person name="Henrissat B."/>
            <person name="Gilbert H.J."/>
            <person name="Nelson K.E."/>
        </authorList>
    </citation>
    <scope>NUCLEOTIDE SEQUENCE [LARGE SCALE GENOMIC DNA]</scope>
    <source>
        <strain>Ueda107</strain>
    </source>
</reference>
<comment type="function">
    <text evidence="1">Phosphorolytic 3'-5' exoribonuclease that plays an important role in tRNA 3'-end maturation. Removes nucleotide residues following the 3'-CCA terminus of tRNAs; can also add nucleotides to the ends of RNA molecules by using nucleoside diphosphates as substrates, but this may not be physiologically important. Probably plays a role in initiation of 16S rRNA degradation (leading to ribosome degradation) during starvation.</text>
</comment>
<comment type="catalytic activity">
    <reaction evidence="1">
        <text>tRNA(n+1) + phosphate = tRNA(n) + a ribonucleoside 5'-diphosphate</text>
        <dbReference type="Rhea" id="RHEA:10628"/>
        <dbReference type="Rhea" id="RHEA-COMP:17343"/>
        <dbReference type="Rhea" id="RHEA-COMP:17344"/>
        <dbReference type="ChEBI" id="CHEBI:43474"/>
        <dbReference type="ChEBI" id="CHEBI:57930"/>
        <dbReference type="ChEBI" id="CHEBI:173114"/>
        <dbReference type="EC" id="2.7.7.56"/>
    </reaction>
</comment>
<comment type="subunit">
    <text evidence="1">Homohexameric ring arranged as a trimer of dimers.</text>
</comment>
<comment type="similarity">
    <text evidence="1">Belongs to the RNase PH family.</text>
</comment>
<evidence type="ECO:0000255" key="1">
    <source>
        <dbReference type="HAMAP-Rule" id="MF_00564"/>
    </source>
</evidence>
<name>RNPH_CELJU</name>
<organism>
    <name type="scientific">Cellvibrio japonicus (strain Ueda107)</name>
    <name type="common">Pseudomonas fluorescens subsp. cellulosa</name>
    <dbReference type="NCBI Taxonomy" id="498211"/>
    <lineage>
        <taxon>Bacteria</taxon>
        <taxon>Pseudomonadati</taxon>
        <taxon>Pseudomonadota</taxon>
        <taxon>Gammaproteobacteria</taxon>
        <taxon>Cellvibrionales</taxon>
        <taxon>Cellvibrionaceae</taxon>
        <taxon>Cellvibrio</taxon>
    </lineage>
</organism>
<protein>
    <recommendedName>
        <fullName evidence="1">Ribonuclease PH</fullName>
        <shortName evidence="1">RNase PH</shortName>
        <ecNumber evidence="1">2.7.7.56</ecNumber>
    </recommendedName>
    <alternativeName>
        <fullName evidence="1">tRNA nucleotidyltransferase</fullName>
    </alternativeName>
</protein>
<dbReference type="EC" id="2.7.7.56" evidence="1"/>
<dbReference type="EMBL" id="CP000934">
    <property type="protein sequence ID" value="ACE85909.1"/>
    <property type="molecule type" value="Genomic_DNA"/>
</dbReference>
<dbReference type="RefSeq" id="WP_012485886.1">
    <property type="nucleotide sequence ID" value="NC_010995.1"/>
</dbReference>
<dbReference type="SMR" id="B3PGE8"/>
<dbReference type="STRING" id="498211.CJA_0203"/>
<dbReference type="KEGG" id="cja:CJA_0203"/>
<dbReference type="eggNOG" id="COG0689">
    <property type="taxonomic scope" value="Bacteria"/>
</dbReference>
<dbReference type="HOGENOM" id="CLU_050858_0_0_6"/>
<dbReference type="OrthoDB" id="9802265at2"/>
<dbReference type="Proteomes" id="UP000001036">
    <property type="component" value="Chromosome"/>
</dbReference>
<dbReference type="GO" id="GO:0000175">
    <property type="term" value="F:3'-5'-RNA exonuclease activity"/>
    <property type="evidence" value="ECO:0007669"/>
    <property type="project" value="UniProtKB-UniRule"/>
</dbReference>
<dbReference type="GO" id="GO:0000049">
    <property type="term" value="F:tRNA binding"/>
    <property type="evidence" value="ECO:0007669"/>
    <property type="project" value="UniProtKB-UniRule"/>
</dbReference>
<dbReference type="GO" id="GO:0009022">
    <property type="term" value="F:tRNA nucleotidyltransferase activity"/>
    <property type="evidence" value="ECO:0007669"/>
    <property type="project" value="UniProtKB-UniRule"/>
</dbReference>
<dbReference type="GO" id="GO:0016075">
    <property type="term" value="P:rRNA catabolic process"/>
    <property type="evidence" value="ECO:0007669"/>
    <property type="project" value="UniProtKB-UniRule"/>
</dbReference>
<dbReference type="GO" id="GO:0006364">
    <property type="term" value="P:rRNA processing"/>
    <property type="evidence" value="ECO:0007669"/>
    <property type="project" value="UniProtKB-KW"/>
</dbReference>
<dbReference type="GO" id="GO:0008033">
    <property type="term" value="P:tRNA processing"/>
    <property type="evidence" value="ECO:0007669"/>
    <property type="project" value="UniProtKB-UniRule"/>
</dbReference>
<dbReference type="CDD" id="cd11362">
    <property type="entry name" value="RNase_PH_bact"/>
    <property type="match status" value="1"/>
</dbReference>
<dbReference type="FunFam" id="3.30.230.70:FF:000003">
    <property type="entry name" value="Ribonuclease PH"/>
    <property type="match status" value="1"/>
</dbReference>
<dbReference type="Gene3D" id="3.30.230.70">
    <property type="entry name" value="GHMP Kinase, N-terminal domain"/>
    <property type="match status" value="1"/>
</dbReference>
<dbReference type="HAMAP" id="MF_00564">
    <property type="entry name" value="RNase_PH"/>
    <property type="match status" value="1"/>
</dbReference>
<dbReference type="InterPro" id="IPR001247">
    <property type="entry name" value="ExoRNase_PH_dom1"/>
</dbReference>
<dbReference type="InterPro" id="IPR015847">
    <property type="entry name" value="ExoRNase_PH_dom2"/>
</dbReference>
<dbReference type="InterPro" id="IPR036345">
    <property type="entry name" value="ExoRNase_PH_dom2_sf"/>
</dbReference>
<dbReference type="InterPro" id="IPR027408">
    <property type="entry name" value="PNPase/RNase_PH_dom_sf"/>
</dbReference>
<dbReference type="InterPro" id="IPR020568">
    <property type="entry name" value="Ribosomal_Su5_D2-typ_SF"/>
</dbReference>
<dbReference type="InterPro" id="IPR050080">
    <property type="entry name" value="RNase_PH"/>
</dbReference>
<dbReference type="InterPro" id="IPR002381">
    <property type="entry name" value="RNase_PH_bac-type"/>
</dbReference>
<dbReference type="InterPro" id="IPR018336">
    <property type="entry name" value="RNase_PH_CS"/>
</dbReference>
<dbReference type="NCBIfam" id="TIGR01966">
    <property type="entry name" value="RNasePH"/>
    <property type="match status" value="1"/>
</dbReference>
<dbReference type="PANTHER" id="PTHR11953">
    <property type="entry name" value="EXOSOME COMPLEX COMPONENT"/>
    <property type="match status" value="1"/>
</dbReference>
<dbReference type="PANTHER" id="PTHR11953:SF0">
    <property type="entry name" value="EXOSOME COMPLEX COMPONENT RRP41"/>
    <property type="match status" value="1"/>
</dbReference>
<dbReference type="Pfam" id="PF01138">
    <property type="entry name" value="RNase_PH"/>
    <property type="match status" value="1"/>
</dbReference>
<dbReference type="Pfam" id="PF03725">
    <property type="entry name" value="RNase_PH_C"/>
    <property type="match status" value="1"/>
</dbReference>
<dbReference type="SUPFAM" id="SSF55666">
    <property type="entry name" value="Ribonuclease PH domain 2-like"/>
    <property type="match status" value="1"/>
</dbReference>
<dbReference type="SUPFAM" id="SSF54211">
    <property type="entry name" value="Ribosomal protein S5 domain 2-like"/>
    <property type="match status" value="1"/>
</dbReference>
<dbReference type="PROSITE" id="PS01277">
    <property type="entry name" value="RIBONUCLEASE_PH"/>
    <property type="match status" value="1"/>
</dbReference>
<proteinExistence type="inferred from homology"/>
<gene>
    <name evidence="1" type="primary">rph</name>
    <name type="ordered locus">CJA_0203</name>
</gene>
<feature type="chain" id="PRO_1000129331" description="Ribonuclease PH">
    <location>
        <begin position="1"/>
        <end position="239"/>
    </location>
</feature>
<feature type="binding site" evidence="1">
    <location>
        <position position="87"/>
    </location>
    <ligand>
        <name>phosphate</name>
        <dbReference type="ChEBI" id="CHEBI:43474"/>
        <note>substrate</note>
    </ligand>
</feature>
<feature type="binding site" evidence="1">
    <location>
        <begin position="125"/>
        <end position="127"/>
    </location>
    <ligand>
        <name>phosphate</name>
        <dbReference type="ChEBI" id="CHEBI:43474"/>
        <note>substrate</note>
    </ligand>
</feature>
<keyword id="KW-0548">Nucleotidyltransferase</keyword>
<keyword id="KW-1185">Reference proteome</keyword>
<keyword id="KW-0694">RNA-binding</keyword>
<keyword id="KW-0698">rRNA processing</keyword>
<keyword id="KW-0808">Transferase</keyword>
<keyword id="KW-0819">tRNA processing</keyword>
<keyword id="KW-0820">tRNA-binding</keyword>